<protein>
    <recommendedName>
        <fullName evidence="1">Photosystem I P700 chlorophyll a apoprotein A2</fullName>
        <ecNumber evidence="1">1.97.1.12</ecNumber>
    </recommendedName>
    <alternativeName>
        <fullName evidence="1">PSI-B</fullName>
    </alternativeName>
    <alternativeName>
        <fullName evidence="1">PsaB</fullName>
    </alternativeName>
</protein>
<organism>
    <name type="scientific">Agrostis stolonifera</name>
    <name type="common">Creeping bentgrass</name>
    <dbReference type="NCBI Taxonomy" id="63632"/>
    <lineage>
        <taxon>Eukaryota</taxon>
        <taxon>Viridiplantae</taxon>
        <taxon>Streptophyta</taxon>
        <taxon>Embryophyta</taxon>
        <taxon>Tracheophyta</taxon>
        <taxon>Spermatophyta</taxon>
        <taxon>Magnoliopsida</taxon>
        <taxon>Liliopsida</taxon>
        <taxon>Poales</taxon>
        <taxon>Poaceae</taxon>
        <taxon>BOP clade</taxon>
        <taxon>Pooideae</taxon>
        <taxon>Poodae</taxon>
        <taxon>Poeae</taxon>
        <taxon>Poeae Chloroplast Group 1 (Aveneae type)</taxon>
        <taxon>Agrostidodinae</taxon>
        <taxon>Agrostidinae</taxon>
        <taxon>Agrostis</taxon>
    </lineage>
</organism>
<proteinExistence type="inferred from homology"/>
<sequence>MELRFPRFSQGLAQDPTTRRIWFGIATAHDFESHDDITEERLYQNIFASHFGQLAIIFLWTSGNLFHVAWQGNFESWIQDPLHVRPIAHAIWDPHFGQPAVEAFTRGGAAGPVNIAYSGVYQWWYTIGLRTNEDLYTGALFLLFLSTLSLVAGWLHLQPKWKPSLSWFKNAESRLNHHLSGLFGVSSLAWTGHLVHVAIPASRGEYVRWNNFLDVLPYPQGLGPLLTGQWNLYAQNPDSSNHLFGTAQGAGTAILTLLGGFHPQTQSLWLTDIAHHHLAIAFIFLIAGHMYRTNFGIGHSIKDLLEAHTPPGGRLGRGHKGLYDTINNSIHFQLGLALASLGVITSLVAQHMYSLPAYAFIAQDFTTQAALYTHHQYIAGFIMTGAFAHGAIFFIRDYNPEQNEDNVLARMLDHKEAIISHLSWASLFLGFHTLGLYVHNDVMLAFGTPEKQILIEPIFAQWIQSAHGKTTYGFDILLSSTNGPAFNAGRSLWLPGWLNAVNENSNSLFLTIGPGDFLVHHAIALGLHTTTLILVKGALDARGSKLMPDKKDFGYSFPCDGPGRGGTCDISAWDAFYLAVFWMLNTIGWVTFYWHWKHITLWQGNVSQFNESSTYLMGWLRDYLWLNSSQLINGYNPFGMNSLSVWAWMFLFGHLVWATGFMFLISWRGYWQELIETLAWAHERTPLANLIRWRDKPVALSIVQARLVGLAHFSVGYIFTYAAFLIASTSGKFG</sequence>
<gene>
    <name evidence="1" type="primary">psaB</name>
</gene>
<feature type="chain" id="PRO_0000277106" description="Photosystem I P700 chlorophyll a apoprotein A2">
    <location>
        <begin position="1"/>
        <end position="734"/>
    </location>
</feature>
<feature type="transmembrane region" description="Helical; Name=I" evidence="1">
    <location>
        <begin position="46"/>
        <end position="69"/>
    </location>
</feature>
<feature type="transmembrane region" description="Helical; Name=II" evidence="1">
    <location>
        <begin position="135"/>
        <end position="158"/>
    </location>
</feature>
<feature type="transmembrane region" description="Helical; Name=III" evidence="1">
    <location>
        <begin position="175"/>
        <end position="199"/>
    </location>
</feature>
<feature type="transmembrane region" description="Helical; Name=IV" evidence="1">
    <location>
        <begin position="273"/>
        <end position="291"/>
    </location>
</feature>
<feature type="transmembrane region" description="Helical; Name=V" evidence="1">
    <location>
        <begin position="330"/>
        <end position="353"/>
    </location>
</feature>
<feature type="transmembrane region" description="Helical; Name=VI" evidence="1">
    <location>
        <begin position="369"/>
        <end position="395"/>
    </location>
</feature>
<feature type="transmembrane region" description="Helical; Name=VII" evidence="1">
    <location>
        <begin position="417"/>
        <end position="439"/>
    </location>
</feature>
<feature type="transmembrane region" description="Helical; Name=VIII" evidence="1">
    <location>
        <begin position="517"/>
        <end position="535"/>
    </location>
</feature>
<feature type="transmembrane region" description="Helical; Name=IX" evidence="1">
    <location>
        <begin position="575"/>
        <end position="596"/>
    </location>
</feature>
<feature type="transmembrane region" description="Helical; Name=X" evidence="1">
    <location>
        <begin position="643"/>
        <end position="665"/>
    </location>
</feature>
<feature type="transmembrane region" description="Helical; Name=XI" evidence="1">
    <location>
        <begin position="707"/>
        <end position="727"/>
    </location>
</feature>
<feature type="binding site" evidence="1">
    <location>
        <position position="559"/>
    </location>
    <ligand>
        <name>[4Fe-4S] cluster</name>
        <dbReference type="ChEBI" id="CHEBI:49883"/>
        <note>ligand shared between dimeric partners</note>
    </ligand>
</feature>
<feature type="binding site" evidence="1">
    <location>
        <position position="568"/>
    </location>
    <ligand>
        <name>[4Fe-4S] cluster</name>
        <dbReference type="ChEBI" id="CHEBI:49883"/>
        <note>ligand shared between dimeric partners</note>
    </ligand>
</feature>
<feature type="binding site" description="axial binding residue" evidence="1">
    <location>
        <position position="654"/>
    </location>
    <ligand>
        <name>chlorophyll a</name>
        <dbReference type="ChEBI" id="CHEBI:58416"/>
        <label>B1</label>
    </ligand>
    <ligandPart>
        <name>Mg</name>
        <dbReference type="ChEBI" id="CHEBI:25107"/>
    </ligandPart>
</feature>
<feature type="binding site" description="axial binding residue" evidence="1">
    <location>
        <position position="662"/>
    </location>
    <ligand>
        <name>chlorophyll a</name>
        <dbReference type="ChEBI" id="CHEBI:58416"/>
        <label>B3</label>
    </ligand>
    <ligandPart>
        <name>Mg</name>
        <dbReference type="ChEBI" id="CHEBI:25107"/>
    </ligandPart>
</feature>
<feature type="binding site" evidence="1">
    <location>
        <position position="670"/>
    </location>
    <ligand>
        <name>chlorophyll a</name>
        <dbReference type="ChEBI" id="CHEBI:58416"/>
        <label>B3</label>
    </ligand>
</feature>
<feature type="binding site" evidence="1">
    <location>
        <position position="671"/>
    </location>
    <ligand>
        <name>phylloquinone</name>
        <dbReference type="ChEBI" id="CHEBI:18067"/>
        <label>B</label>
    </ligand>
</feature>
<reference key="1">
    <citation type="journal article" date="2007" name="Theor. Appl. Genet.">
        <title>Complete chloroplast genome sequences of Hordeum vulgare, Sorghum bicolor and Agrostis stolonifera, and comparative analyses with other grass genomes.</title>
        <authorList>
            <person name="Saski C."/>
            <person name="Lee S.-B."/>
            <person name="Fjellheim S."/>
            <person name="Guda C."/>
            <person name="Jansen R.K."/>
            <person name="Luo H."/>
            <person name="Tomkins J."/>
            <person name="Rognli O.A."/>
            <person name="Daniell H."/>
            <person name="Clarke J.L."/>
        </authorList>
    </citation>
    <scope>NUCLEOTIDE SEQUENCE [LARGE SCALE GENOMIC DNA]</scope>
    <source>
        <strain>cv. Penn A-4</strain>
    </source>
</reference>
<comment type="function">
    <text evidence="1">PsaA and PsaB bind P700, the primary electron donor of photosystem I (PSI), as well as the electron acceptors A0, A1 and FX. PSI is a plastocyanin-ferredoxin oxidoreductase, converting photonic excitation into a charge separation, which transfers an electron from the donor P700 chlorophyll pair to the spectroscopically characterized acceptors A0, A1, FX, FA and FB in turn. Oxidized P700 is reduced on the lumenal side of the thylakoid membrane by plastocyanin.</text>
</comment>
<comment type="catalytic activity">
    <reaction evidence="1">
        <text>reduced [plastocyanin] + hnu + oxidized [2Fe-2S]-[ferredoxin] = oxidized [plastocyanin] + reduced [2Fe-2S]-[ferredoxin]</text>
        <dbReference type="Rhea" id="RHEA:30407"/>
        <dbReference type="Rhea" id="RHEA-COMP:10000"/>
        <dbReference type="Rhea" id="RHEA-COMP:10001"/>
        <dbReference type="Rhea" id="RHEA-COMP:10039"/>
        <dbReference type="Rhea" id="RHEA-COMP:10040"/>
        <dbReference type="ChEBI" id="CHEBI:29036"/>
        <dbReference type="ChEBI" id="CHEBI:30212"/>
        <dbReference type="ChEBI" id="CHEBI:33737"/>
        <dbReference type="ChEBI" id="CHEBI:33738"/>
        <dbReference type="ChEBI" id="CHEBI:49552"/>
        <dbReference type="EC" id="1.97.1.12"/>
    </reaction>
</comment>
<comment type="cofactor">
    <text evidence="1">P700 is a chlorophyll a/chlorophyll a' dimer, A0 is one or more chlorophyll a, A1 is one or both phylloquinones and FX is a shared 4Fe-4S iron-sulfur center.</text>
</comment>
<comment type="subunit">
    <text evidence="1">The PsaA/B heterodimer binds the P700 chlorophyll special pair and subsequent electron acceptors. PSI consists of a core antenna complex that captures photons, and an electron transfer chain that converts photonic excitation into a charge separation. The eukaryotic PSI reaction center is composed of at least 11 subunits.</text>
</comment>
<comment type="subcellular location">
    <subcellularLocation>
        <location>Plastid</location>
        <location>Chloroplast thylakoid membrane</location>
        <topology>Multi-pass membrane protein</topology>
    </subcellularLocation>
</comment>
<comment type="similarity">
    <text evidence="1">Belongs to the PsaA/PsaB family.</text>
</comment>
<evidence type="ECO:0000255" key="1">
    <source>
        <dbReference type="HAMAP-Rule" id="MF_00482"/>
    </source>
</evidence>
<geneLocation type="chloroplast"/>
<accession>A1EA07</accession>
<keyword id="KW-0004">4Fe-4S</keyword>
<keyword id="KW-0148">Chlorophyll</keyword>
<keyword id="KW-0150">Chloroplast</keyword>
<keyword id="KW-0157">Chromophore</keyword>
<keyword id="KW-0249">Electron transport</keyword>
<keyword id="KW-0408">Iron</keyword>
<keyword id="KW-0411">Iron-sulfur</keyword>
<keyword id="KW-0460">Magnesium</keyword>
<keyword id="KW-0472">Membrane</keyword>
<keyword id="KW-0479">Metal-binding</keyword>
<keyword id="KW-0560">Oxidoreductase</keyword>
<keyword id="KW-0602">Photosynthesis</keyword>
<keyword id="KW-0603">Photosystem I</keyword>
<keyword id="KW-0934">Plastid</keyword>
<keyword id="KW-0793">Thylakoid</keyword>
<keyword id="KW-0812">Transmembrane</keyword>
<keyword id="KW-1133">Transmembrane helix</keyword>
<keyword id="KW-0813">Transport</keyword>
<name>PSAB_AGRST</name>
<dbReference type="EC" id="1.97.1.12" evidence="1"/>
<dbReference type="EMBL" id="EF115543">
    <property type="protein sequence ID" value="ABK79579.1"/>
    <property type="molecule type" value="Genomic_DNA"/>
</dbReference>
<dbReference type="RefSeq" id="YP_874735.1">
    <property type="nucleotide sequence ID" value="NC_008591.1"/>
</dbReference>
<dbReference type="SMR" id="A1EA07"/>
<dbReference type="GeneID" id="4524931"/>
<dbReference type="GO" id="GO:0009535">
    <property type="term" value="C:chloroplast thylakoid membrane"/>
    <property type="evidence" value="ECO:0007669"/>
    <property type="project" value="UniProtKB-SubCell"/>
</dbReference>
<dbReference type="GO" id="GO:0009522">
    <property type="term" value="C:photosystem I"/>
    <property type="evidence" value="ECO:0007669"/>
    <property type="project" value="UniProtKB-KW"/>
</dbReference>
<dbReference type="GO" id="GO:0051539">
    <property type="term" value="F:4 iron, 4 sulfur cluster binding"/>
    <property type="evidence" value="ECO:0007669"/>
    <property type="project" value="UniProtKB-KW"/>
</dbReference>
<dbReference type="GO" id="GO:0016168">
    <property type="term" value="F:chlorophyll binding"/>
    <property type="evidence" value="ECO:0007669"/>
    <property type="project" value="UniProtKB-KW"/>
</dbReference>
<dbReference type="GO" id="GO:0009055">
    <property type="term" value="F:electron transfer activity"/>
    <property type="evidence" value="ECO:0007669"/>
    <property type="project" value="UniProtKB-UniRule"/>
</dbReference>
<dbReference type="GO" id="GO:0000287">
    <property type="term" value="F:magnesium ion binding"/>
    <property type="evidence" value="ECO:0007669"/>
    <property type="project" value="UniProtKB-UniRule"/>
</dbReference>
<dbReference type="GO" id="GO:0016491">
    <property type="term" value="F:oxidoreductase activity"/>
    <property type="evidence" value="ECO:0007669"/>
    <property type="project" value="UniProtKB-KW"/>
</dbReference>
<dbReference type="GO" id="GO:0015979">
    <property type="term" value="P:photosynthesis"/>
    <property type="evidence" value="ECO:0007669"/>
    <property type="project" value="UniProtKB-UniRule"/>
</dbReference>
<dbReference type="FunFam" id="1.20.1130.10:FF:000001">
    <property type="entry name" value="Photosystem I P700 chlorophyll a apoprotein A2"/>
    <property type="match status" value="1"/>
</dbReference>
<dbReference type="Gene3D" id="1.20.1130.10">
    <property type="entry name" value="Photosystem I PsaA/PsaB"/>
    <property type="match status" value="1"/>
</dbReference>
<dbReference type="HAMAP" id="MF_00482">
    <property type="entry name" value="PSI_PsaB"/>
    <property type="match status" value="1"/>
</dbReference>
<dbReference type="InterPro" id="IPR001280">
    <property type="entry name" value="PSI_PsaA/B"/>
</dbReference>
<dbReference type="InterPro" id="IPR020586">
    <property type="entry name" value="PSI_PsaA/B_CS"/>
</dbReference>
<dbReference type="InterPro" id="IPR036408">
    <property type="entry name" value="PSI_PsaA/B_sf"/>
</dbReference>
<dbReference type="InterPro" id="IPR006244">
    <property type="entry name" value="PSI_PsaB"/>
</dbReference>
<dbReference type="NCBIfam" id="TIGR01336">
    <property type="entry name" value="psaB"/>
    <property type="match status" value="1"/>
</dbReference>
<dbReference type="PANTHER" id="PTHR30128">
    <property type="entry name" value="OUTER MEMBRANE PROTEIN, OMPA-RELATED"/>
    <property type="match status" value="1"/>
</dbReference>
<dbReference type="PANTHER" id="PTHR30128:SF19">
    <property type="entry name" value="PHOTOSYSTEM I P700 CHLOROPHYLL A APOPROTEIN A1-RELATED"/>
    <property type="match status" value="1"/>
</dbReference>
<dbReference type="Pfam" id="PF00223">
    <property type="entry name" value="PsaA_PsaB"/>
    <property type="match status" value="1"/>
</dbReference>
<dbReference type="PIRSF" id="PIRSF002905">
    <property type="entry name" value="PSI_A"/>
    <property type="match status" value="1"/>
</dbReference>
<dbReference type="PRINTS" id="PR00257">
    <property type="entry name" value="PHOTSYSPSAAB"/>
</dbReference>
<dbReference type="SUPFAM" id="SSF81558">
    <property type="entry name" value="Photosystem I subunits PsaA/PsaB"/>
    <property type="match status" value="1"/>
</dbReference>
<dbReference type="PROSITE" id="PS00419">
    <property type="entry name" value="PHOTOSYSTEM_I_PSAAB"/>
    <property type="match status" value="1"/>
</dbReference>